<proteinExistence type="evidence at protein level"/>
<comment type="interaction">
    <interactant intactId="EBI-7492115">
        <id>O94450</id>
    </interactant>
    <interactant intactId="EBI-913806">
        <id>P29458</id>
        <label>mcm4</label>
    </interactant>
    <organismsDiffer>false</organismsDiffer>
    <experiments>3</experiments>
</comment>
<comment type="interaction">
    <interactant intactId="EBI-7492115">
        <id>O94450</id>
    </interactant>
    <interactant intactId="EBI-913821">
        <id>P41389</id>
        <label>mcm5</label>
    </interactant>
    <organismsDiffer>false</organismsDiffer>
    <experiments>2</experiments>
</comment>
<comment type="interaction">
    <interactant intactId="EBI-7492115">
        <id>O94450</id>
    </interactant>
    <interactant intactId="EBI-913838">
        <id>P49731</id>
        <label>mcm6</label>
    </interactant>
    <organismsDiffer>false</organismsDiffer>
    <experiments>2</experiments>
</comment>
<comment type="interaction">
    <interactant intactId="EBI-7492115">
        <id>O94450</id>
    </interactant>
    <interactant intactId="EBI-913851">
        <id>O75001</id>
        <label>mcm7</label>
    </interactant>
    <organismsDiffer>false</organismsDiffer>
    <experiments>2</experiments>
</comment>
<comment type="subcellular location">
    <subcellularLocation>
        <location evidence="1">Cytoplasm</location>
    </subcellularLocation>
    <subcellularLocation>
        <location evidence="1">Nucleus</location>
    </subcellularLocation>
</comment>
<comment type="similarity">
    <text evidence="2">Belongs to the UPF0616 family.</text>
</comment>
<gene>
    <name type="ORF">SPAC1687.04</name>
</gene>
<organism>
    <name type="scientific">Schizosaccharomyces pombe (strain 972 / ATCC 24843)</name>
    <name type="common">Fission yeast</name>
    <dbReference type="NCBI Taxonomy" id="284812"/>
    <lineage>
        <taxon>Eukaryota</taxon>
        <taxon>Fungi</taxon>
        <taxon>Dikarya</taxon>
        <taxon>Ascomycota</taxon>
        <taxon>Taphrinomycotina</taxon>
        <taxon>Schizosaccharomycetes</taxon>
        <taxon>Schizosaccharomycetales</taxon>
        <taxon>Schizosaccharomycetaceae</taxon>
        <taxon>Schizosaccharomyces</taxon>
    </lineage>
</organism>
<keyword id="KW-0963">Cytoplasm</keyword>
<keyword id="KW-0539">Nucleus</keyword>
<keyword id="KW-1185">Reference proteome</keyword>
<name>YFF4_SCHPO</name>
<protein>
    <recommendedName>
        <fullName>UPF0616 protein C1687.04</fullName>
    </recommendedName>
</protein>
<evidence type="ECO:0000269" key="1">
    <source>
    </source>
</evidence>
<evidence type="ECO:0000305" key="2"/>
<feature type="chain" id="PRO_0000343149" description="UPF0616 protein C1687.04">
    <location>
        <begin position="1"/>
        <end position="501"/>
    </location>
</feature>
<dbReference type="EMBL" id="CU329670">
    <property type="protein sequence ID" value="CAA22598.1"/>
    <property type="molecule type" value="Genomic_DNA"/>
</dbReference>
<dbReference type="PIR" id="T37747">
    <property type="entry name" value="T37747"/>
</dbReference>
<dbReference type="SMR" id="O94450"/>
<dbReference type="BioGRID" id="279244">
    <property type="interactions" value="22"/>
</dbReference>
<dbReference type="FunCoup" id="O94450">
    <property type="interactions" value="12"/>
</dbReference>
<dbReference type="IntAct" id="O94450">
    <property type="interactions" value="5"/>
</dbReference>
<dbReference type="MINT" id="O94450"/>
<dbReference type="STRING" id="284812.O94450"/>
<dbReference type="iPTMnet" id="O94450"/>
<dbReference type="SwissPalm" id="O94450"/>
<dbReference type="PaxDb" id="4896-SPAC1687.04.1"/>
<dbReference type="EnsemblFungi" id="SPAC1687.04.1">
    <property type="protein sequence ID" value="SPAC1687.04.1:pep"/>
    <property type="gene ID" value="SPAC1687.04"/>
</dbReference>
<dbReference type="KEGG" id="spo:2542796"/>
<dbReference type="PomBase" id="SPAC1687.04"/>
<dbReference type="VEuPathDB" id="FungiDB:SPAC1687.04"/>
<dbReference type="eggNOG" id="KOG2545">
    <property type="taxonomic scope" value="Eukaryota"/>
</dbReference>
<dbReference type="HOGENOM" id="CLU_544182_0_0_1"/>
<dbReference type="InParanoid" id="O94450"/>
<dbReference type="OMA" id="DTNFGHE"/>
<dbReference type="PhylomeDB" id="O94450"/>
<dbReference type="PRO" id="PR:O94450"/>
<dbReference type="Proteomes" id="UP000002485">
    <property type="component" value="Chromosome I"/>
</dbReference>
<dbReference type="GO" id="GO:0000785">
    <property type="term" value="C:chromatin"/>
    <property type="evidence" value="ECO:0000314"/>
    <property type="project" value="PomBase"/>
</dbReference>
<dbReference type="GO" id="GO:0005737">
    <property type="term" value="C:cytoplasm"/>
    <property type="evidence" value="ECO:0000314"/>
    <property type="project" value="PomBase"/>
</dbReference>
<dbReference type="GO" id="GO:0005829">
    <property type="term" value="C:cytosol"/>
    <property type="evidence" value="ECO:0007005"/>
    <property type="project" value="PomBase"/>
</dbReference>
<dbReference type="GO" id="GO:0005654">
    <property type="term" value="C:nucleoplasm"/>
    <property type="evidence" value="ECO:0000314"/>
    <property type="project" value="PomBase"/>
</dbReference>
<dbReference type="GO" id="GO:0005634">
    <property type="term" value="C:nucleus"/>
    <property type="evidence" value="ECO:0007005"/>
    <property type="project" value="PomBase"/>
</dbReference>
<dbReference type="GO" id="GO:0003682">
    <property type="term" value="F:chromatin binding"/>
    <property type="evidence" value="ECO:0000318"/>
    <property type="project" value="GO_Central"/>
</dbReference>
<dbReference type="GO" id="GO:0006261">
    <property type="term" value="P:DNA-templated DNA replication"/>
    <property type="evidence" value="ECO:0000318"/>
    <property type="project" value="GO_Central"/>
</dbReference>
<dbReference type="GO" id="GO:0033260">
    <property type="term" value="P:nuclear DNA replication"/>
    <property type="evidence" value="ECO:0000315"/>
    <property type="project" value="PomBase"/>
</dbReference>
<dbReference type="InterPro" id="IPR019140">
    <property type="entry name" value="MCM_complex-bd"/>
</dbReference>
<dbReference type="PANTHER" id="PTHR13489">
    <property type="entry name" value="MINI-CHROMOSOME MAINTENANCE COMPLEX-BINDING PROTEIN"/>
    <property type="match status" value="1"/>
</dbReference>
<dbReference type="PANTHER" id="PTHR13489:SF0">
    <property type="entry name" value="MINI-CHROMOSOME MAINTENANCE COMPLEX-BINDING PROTEIN"/>
    <property type="match status" value="1"/>
</dbReference>
<dbReference type="Pfam" id="PF09739">
    <property type="entry name" value="MCM_bind"/>
    <property type="match status" value="2"/>
</dbReference>
<sequence>MVIALSDSFIENPRSFLQRFQDALFAGSKPDLQGTLGIDEEVSNIFATEERIRKIPNYLDCKWSELKTGQLLRLQGMVQDTNFGHEFFAGAVEVNENIWRGCRYILDFSEDEMHLDESKIVLDERYSLFLTNVPGERTLPVIEALGNWGSESLKERSLKYSNRLQASNDTGVCVKCYGGMETKVQVCQAIDVIGIYEEPSEYSDGLPILHMLCFKDYTQSATQAPSPQQAEIIRPKILKYFEKVLGENIAAESLMLALLSNVVHKTTGLVIGGFTLNLTNCTSELVSQLVSVLRPLIKRMVIQKVNVAELNRKPLYPLSDGETLDTSHLQVAPGTLIVLDETELSSGTLNDVGCRNVQFLSSLISQQDLTFFYPFSSFTVHSNVRIIILSHGRSILPADVGCRCRGDSPDTIEFPTDSDELQEFCNFFHMWNMRANIPENMLDYIQSTYVSSRQYNKEINEKTLSLQINCSRLYAKSFGRQLVSRIDFEAARSLINHWTVN</sequence>
<accession>O94450</accession>
<reference key="1">
    <citation type="journal article" date="2002" name="Nature">
        <title>The genome sequence of Schizosaccharomyces pombe.</title>
        <authorList>
            <person name="Wood V."/>
            <person name="Gwilliam R."/>
            <person name="Rajandream M.A."/>
            <person name="Lyne M.H."/>
            <person name="Lyne R."/>
            <person name="Stewart A."/>
            <person name="Sgouros J.G."/>
            <person name="Peat N."/>
            <person name="Hayles J."/>
            <person name="Baker S.G."/>
            <person name="Basham D."/>
            <person name="Bowman S."/>
            <person name="Brooks K."/>
            <person name="Brown D."/>
            <person name="Brown S."/>
            <person name="Chillingworth T."/>
            <person name="Churcher C.M."/>
            <person name="Collins M."/>
            <person name="Connor R."/>
            <person name="Cronin A."/>
            <person name="Davis P."/>
            <person name="Feltwell T."/>
            <person name="Fraser A."/>
            <person name="Gentles S."/>
            <person name="Goble A."/>
            <person name="Hamlin N."/>
            <person name="Harris D.E."/>
            <person name="Hidalgo J."/>
            <person name="Hodgson G."/>
            <person name="Holroyd S."/>
            <person name="Hornsby T."/>
            <person name="Howarth S."/>
            <person name="Huckle E.J."/>
            <person name="Hunt S."/>
            <person name="Jagels K."/>
            <person name="James K.D."/>
            <person name="Jones L."/>
            <person name="Jones M."/>
            <person name="Leather S."/>
            <person name="McDonald S."/>
            <person name="McLean J."/>
            <person name="Mooney P."/>
            <person name="Moule S."/>
            <person name="Mungall K.L."/>
            <person name="Murphy L.D."/>
            <person name="Niblett D."/>
            <person name="Odell C."/>
            <person name="Oliver K."/>
            <person name="O'Neil S."/>
            <person name="Pearson D."/>
            <person name="Quail M.A."/>
            <person name="Rabbinowitsch E."/>
            <person name="Rutherford K.M."/>
            <person name="Rutter S."/>
            <person name="Saunders D."/>
            <person name="Seeger K."/>
            <person name="Sharp S."/>
            <person name="Skelton J."/>
            <person name="Simmonds M.N."/>
            <person name="Squares R."/>
            <person name="Squares S."/>
            <person name="Stevens K."/>
            <person name="Taylor K."/>
            <person name="Taylor R.G."/>
            <person name="Tivey A."/>
            <person name="Walsh S.V."/>
            <person name="Warren T."/>
            <person name="Whitehead S."/>
            <person name="Woodward J.R."/>
            <person name="Volckaert G."/>
            <person name="Aert R."/>
            <person name="Robben J."/>
            <person name="Grymonprez B."/>
            <person name="Weltjens I."/>
            <person name="Vanstreels E."/>
            <person name="Rieger M."/>
            <person name="Schaefer M."/>
            <person name="Mueller-Auer S."/>
            <person name="Gabel C."/>
            <person name="Fuchs M."/>
            <person name="Duesterhoeft A."/>
            <person name="Fritzc C."/>
            <person name="Holzer E."/>
            <person name="Moestl D."/>
            <person name="Hilbert H."/>
            <person name="Borzym K."/>
            <person name="Langer I."/>
            <person name="Beck A."/>
            <person name="Lehrach H."/>
            <person name="Reinhardt R."/>
            <person name="Pohl T.M."/>
            <person name="Eger P."/>
            <person name="Zimmermann W."/>
            <person name="Wedler H."/>
            <person name="Wambutt R."/>
            <person name="Purnelle B."/>
            <person name="Goffeau A."/>
            <person name="Cadieu E."/>
            <person name="Dreano S."/>
            <person name="Gloux S."/>
            <person name="Lelaure V."/>
            <person name="Mottier S."/>
            <person name="Galibert F."/>
            <person name="Aves S.J."/>
            <person name="Xiang Z."/>
            <person name="Hunt C."/>
            <person name="Moore K."/>
            <person name="Hurst S.M."/>
            <person name="Lucas M."/>
            <person name="Rochet M."/>
            <person name="Gaillardin C."/>
            <person name="Tallada V.A."/>
            <person name="Garzon A."/>
            <person name="Thode G."/>
            <person name="Daga R.R."/>
            <person name="Cruzado L."/>
            <person name="Jimenez J."/>
            <person name="Sanchez M."/>
            <person name="del Rey F."/>
            <person name="Benito J."/>
            <person name="Dominguez A."/>
            <person name="Revuelta J.L."/>
            <person name="Moreno S."/>
            <person name="Armstrong J."/>
            <person name="Forsburg S.L."/>
            <person name="Cerutti L."/>
            <person name="Lowe T."/>
            <person name="McCombie W.R."/>
            <person name="Paulsen I."/>
            <person name="Potashkin J."/>
            <person name="Shpakovski G.V."/>
            <person name="Ussery D."/>
            <person name="Barrell B.G."/>
            <person name="Nurse P."/>
        </authorList>
    </citation>
    <scope>NUCLEOTIDE SEQUENCE [LARGE SCALE GENOMIC DNA]</scope>
    <source>
        <strain>972 / ATCC 24843</strain>
    </source>
</reference>
<reference key="2">
    <citation type="journal article" date="2006" name="Nat. Biotechnol.">
        <title>ORFeome cloning and global analysis of protein localization in the fission yeast Schizosaccharomyces pombe.</title>
        <authorList>
            <person name="Matsuyama A."/>
            <person name="Arai R."/>
            <person name="Yashiroda Y."/>
            <person name="Shirai A."/>
            <person name="Kamata A."/>
            <person name="Sekido S."/>
            <person name="Kobayashi Y."/>
            <person name="Hashimoto A."/>
            <person name="Hamamoto M."/>
            <person name="Hiraoka Y."/>
            <person name="Horinouchi S."/>
            <person name="Yoshida M."/>
        </authorList>
    </citation>
    <scope>SUBCELLULAR LOCATION [LARGE SCALE ANALYSIS]</scope>
</reference>